<accession>C0MF27</accession>
<evidence type="ECO:0000250" key="1"/>
<evidence type="ECO:0000255" key="2">
    <source>
        <dbReference type="HAMAP-Rule" id="MF_00403"/>
    </source>
</evidence>
<evidence type="ECO:0000256" key="3">
    <source>
        <dbReference type="SAM" id="MobiDB-lite"/>
    </source>
</evidence>
<evidence type="ECO:0000305" key="4"/>
<keyword id="KW-0488">Methylation</keyword>
<keyword id="KW-0687">Ribonucleoprotein</keyword>
<keyword id="KW-0689">Ribosomal protein</keyword>
<keyword id="KW-0694">RNA-binding</keyword>
<keyword id="KW-0699">rRNA-binding</keyword>
<keyword id="KW-0820">tRNA-binding</keyword>
<name>RS12_STRS7</name>
<organism>
    <name type="scientific">Streptococcus equi subsp. zooepidemicus (strain H70)</name>
    <dbReference type="NCBI Taxonomy" id="553483"/>
    <lineage>
        <taxon>Bacteria</taxon>
        <taxon>Bacillati</taxon>
        <taxon>Bacillota</taxon>
        <taxon>Bacilli</taxon>
        <taxon>Lactobacillales</taxon>
        <taxon>Streptococcaceae</taxon>
        <taxon>Streptococcus</taxon>
    </lineage>
</organism>
<reference key="1">
    <citation type="journal article" date="2009" name="PLoS Pathog.">
        <title>Genomic evidence for the evolution of Streptococcus equi: host restriction, increased virulence, and genetic exchange with human pathogens.</title>
        <authorList>
            <person name="Holden M.T.G."/>
            <person name="Heather Z."/>
            <person name="Paillot R."/>
            <person name="Steward K.F."/>
            <person name="Webb K."/>
            <person name="Ainslie F."/>
            <person name="Jourdan T."/>
            <person name="Bason N.C."/>
            <person name="Holroyd N.E."/>
            <person name="Mungall K."/>
            <person name="Quail M.A."/>
            <person name="Sanders M."/>
            <person name="Simmonds M."/>
            <person name="Willey D."/>
            <person name="Brooks K."/>
            <person name="Aanensen D.M."/>
            <person name="Spratt B.G."/>
            <person name="Jolley K.A."/>
            <person name="Maiden M.C.J."/>
            <person name="Kehoe M."/>
            <person name="Chanter N."/>
            <person name="Bentley S.D."/>
            <person name="Robinson C."/>
            <person name="Maskell D.J."/>
            <person name="Parkhill J."/>
            <person name="Waller A.S."/>
        </authorList>
    </citation>
    <scope>NUCLEOTIDE SEQUENCE [LARGE SCALE GENOMIC DNA]</scope>
    <source>
        <strain>H70</strain>
    </source>
</reference>
<comment type="function">
    <text evidence="2">With S4 and S5 plays an important role in translational accuracy.</text>
</comment>
<comment type="function">
    <text evidence="2">Interacts with and stabilizes bases of the 16S rRNA that are involved in tRNA selection in the A site and with the mRNA backbone. Located at the interface of the 30S and 50S subunits, it traverses the body of the 30S subunit contacting proteins on the other side and probably holding the rRNA structure together. The combined cluster of proteins S8, S12 and S17 appears to hold together the shoulder and platform of the 30S subunit.</text>
</comment>
<comment type="subunit">
    <text evidence="2">Part of the 30S ribosomal subunit. Contacts proteins S8 and S17. May interact with IF1 in the 30S initiation complex.</text>
</comment>
<comment type="similarity">
    <text evidence="2">Belongs to the universal ribosomal protein uS12 family.</text>
</comment>
<gene>
    <name evidence="2" type="primary">rpsL</name>
    <name type="ordered locus">SZO_16910</name>
</gene>
<feature type="chain" id="PRO_1000205927" description="Small ribosomal subunit protein uS12">
    <location>
        <begin position="1"/>
        <end position="137"/>
    </location>
</feature>
<feature type="region of interest" description="Disordered" evidence="3">
    <location>
        <begin position="1"/>
        <end position="21"/>
    </location>
</feature>
<feature type="region of interest" description="Disordered" evidence="3">
    <location>
        <begin position="34"/>
        <end position="57"/>
    </location>
</feature>
<feature type="modified residue" description="3-methylthioaspartic acid" evidence="1">
    <location>
        <position position="102"/>
    </location>
</feature>
<sequence length="137" mass="15077">MPTINQLVRKPRKSKIEKSDSPALNIGYNSHKKVHTKLAAPQKRGVATRVGTMTPKKPNSALRKFARVRLSNLIEVTAYIPGIGHNLQEHSVVLIRGGRVKDLPGVRYHIVRGALDTAGVADRKQGRSKYGAKRPKG</sequence>
<dbReference type="EMBL" id="FM204884">
    <property type="protein sequence ID" value="CAX00478.1"/>
    <property type="molecule type" value="Genomic_DNA"/>
</dbReference>
<dbReference type="SMR" id="C0MF27"/>
<dbReference type="KEGG" id="seq:SZO_16910"/>
<dbReference type="eggNOG" id="COG0048">
    <property type="taxonomic scope" value="Bacteria"/>
</dbReference>
<dbReference type="HOGENOM" id="CLU_104295_1_2_9"/>
<dbReference type="Proteomes" id="UP000001368">
    <property type="component" value="Chromosome"/>
</dbReference>
<dbReference type="GO" id="GO:0015935">
    <property type="term" value="C:small ribosomal subunit"/>
    <property type="evidence" value="ECO:0007669"/>
    <property type="project" value="InterPro"/>
</dbReference>
<dbReference type="GO" id="GO:0019843">
    <property type="term" value="F:rRNA binding"/>
    <property type="evidence" value="ECO:0007669"/>
    <property type="project" value="UniProtKB-UniRule"/>
</dbReference>
<dbReference type="GO" id="GO:0003735">
    <property type="term" value="F:structural constituent of ribosome"/>
    <property type="evidence" value="ECO:0007669"/>
    <property type="project" value="InterPro"/>
</dbReference>
<dbReference type="GO" id="GO:0000049">
    <property type="term" value="F:tRNA binding"/>
    <property type="evidence" value="ECO:0007669"/>
    <property type="project" value="UniProtKB-UniRule"/>
</dbReference>
<dbReference type="GO" id="GO:0006412">
    <property type="term" value="P:translation"/>
    <property type="evidence" value="ECO:0007669"/>
    <property type="project" value="UniProtKB-UniRule"/>
</dbReference>
<dbReference type="CDD" id="cd03368">
    <property type="entry name" value="Ribosomal_S12"/>
    <property type="match status" value="1"/>
</dbReference>
<dbReference type="FunFam" id="2.40.50.140:FF:000001">
    <property type="entry name" value="30S ribosomal protein S12"/>
    <property type="match status" value="1"/>
</dbReference>
<dbReference type="Gene3D" id="2.40.50.140">
    <property type="entry name" value="Nucleic acid-binding proteins"/>
    <property type="match status" value="1"/>
</dbReference>
<dbReference type="HAMAP" id="MF_00403_B">
    <property type="entry name" value="Ribosomal_uS12_B"/>
    <property type="match status" value="1"/>
</dbReference>
<dbReference type="InterPro" id="IPR012340">
    <property type="entry name" value="NA-bd_OB-fold"/>
</dbReference>
<dbReference type="InterPro" id="IPR006032">
    <property type="entry name" value="Ribosomal_uS12"/>
</dbReference>
<dbReference type="InterPro" id="IPR005679">
    <property type="entry name" value="Ribosomal_uS12_bac"/>
</dbReference>
<dbReference type="NCBIfam" id="TIGR00981">
    <property type="entry name" value="rpsL_bact"/>
    <property type="match status" value="1"/>
</dbReference>
<dbReference type="PANTHER" id="PTHR11652">
    <property type="entry name" value="30S RIBOSOMAL PROTEIN S12 FAMILY MEMBER"/>
    <property type="match status" value="1"/>
</dbReference>
<dbReference type="Pfam" id="PF00164">
    <property type="entry name" value="Ribosom_S12_S23"/>
    <property type="match status" value="1"/>
</dbReference>
<dbReference type="PRINTS" id="PR01034">
    <property type="entry name" value="RIBOSOMALS12"/>
</dbReference>
<dbReference type="SUPFAM" id="SSF50249">
    <property type="entry name" value="Nucleic acid-binding proteins"/>
    <property type="match status" value="1"/>
</dbReference>
<dbReference type="PROSITE" id="PS00055">
    <property type="entry name" value="RIBOSOMAL_S12"/>
    <property type="match status" value="1"/>
</dbReference>
<proteinExistence type="inferred from homology"/>
<protein>
    <recommendedName>
        <fullName evidence="2">Small ribosomal subunit protein uS12</fullName>
    </recommendedName>
    <alternativeName>
        <fullName evidence="4">30S ribosomal protein S12</fullName>
    </alternativeName>
</protein>